<sequence length="275" mass="30146">MVRKIAIYGKGGIGKSTTTQNTVAAMAHFHDKKVFIHGCDPKADSTRLILHGKQQVTMMDTLREKGEDECTPDKVIEVGFGGVKCVESGGPEPGVGCAGRGVITAITLMEQHGVYEDDLDFVFFDVLGDVVCGGFAMPVRDGKADEIYVVASGEMMALYAANNICKGMVKYAEQSGVRLGGIICNSRNVDGELDLLQEFCDKIGTQLIHFVPRDNIVQKAEFQKKAVVDYDDTCNQALEYKELARKIIENENLVIPTPMTMDELEELTSKYGFLD</sequence>
<dbReference type="EC" id="1.18.6.1"/>
<dbReference type="EMBL" id="U75887">
    <property type="protein sequence ID" value="AAC45512.1"/>
    <property type="molecule type" value="Genomic_DNA"/>
</dbReference>
<dbReference type="PIR" id="T10090">
    <property type="entry name" value="T10090"/>
</dbReference>
<dbReference type="RefSeq" id="WP_011170797.1">
    <property type="nucleotide sequence ID" value="NZ_JAGINF010000001.1"/>
</dbReference>
<dbReference type="SMR" id="P0CW56"/>
<dbReference type="GeneID" id="36101236"/>
<dbReference type="OMA" id="EFDPECN"/>
<dbReference type="GO" id="GO:0051539">
    <property type="term" value="F:4 iron, 4 sulfur cluster binding"/>
    <property type="evidence" value="ECO:0007669"/>
    <property type="project" value="UniProtKB-KW"/>
</dbReference>
<dbReference type="GO" id="GO:0005524">
    <property type="term" value="F:ATP binding"/>
    <property type="evidence" value="ECO:0007669"/>
    <property type="project" value="UniProtKB-UniRule"/>
</dbReference>
<dbReference type="GO" id="GO:0046872">
    <property type="term" value="F:metal ion binding"/>
    <property type="evidence" value="ECO:0007669"/>
    <property type="project" value="UniProtKB-KW"/>
</dbReference>
<dbReference type="GO" id="GO:0016163">
    <property type="term" value="F:nitrogenase activity"/>
    <property type="evidence" value="ECO:0007669"/>
    <property type="project" value="UniProtKB-UniRule"/>
</dbReference>
<dbReference type="GO" id="GO:0009399">
    <property type="term" value="P:nitrogen fixation"/>
    <property type="evidence" value="ECO:0007669"/>
    <property type="project" value="UniProtKB-UniRule"/>
</dbReference>
<dbReference type="CDD" id="cd02040">
    <property type="entry name" value="NifH"/>
    <property type="match status" value="1"/>
</dbReference>
<dbReference type="Gene3D" id="3.40.50.300">
    <property type="entry name" value="P-loop containing nucleotide triphosphate hydrolases"/>
    <property type="match status" value="1"/>
</dbReference>
<dbReference type="HAMAP" id="MF_00533">
    <property type="entry name" value="NifH"/>
    <property type="match status" value="1"/>
</dbReference>
<dbReference type="InterPro" id="IPR030655">
    <property type="entry name" value="NifH/chlL_CS"/>
</dbReference>
<dbReference type="InterPro" id="IPR000392">
    <property type="entry name" value="NifH/frxC"/>
</dbReference>
<dbReference type="InterPro" id="IPR005977">
    <property type="entry name" value="Nitrogenase_Fe_NifH"/>
</dbReference>
<dbReference type="InterPro" id="IPR027417">
    <property type="entry name" value="P-loop_NTPase"/>
</dbReference>
<dbReference type="NCBIfam" id="TIGR01287">
    <property type="entry name" value="nifH"/>
    <property type="match status" value="1"/>
</dbReference>
<dbReference type="PANTHER" id="PTHR42864">
    <property type="entry name" value="LIGHT-INDEPENDENT PROTOCHLOROPHYLLIDE REDUCTASE IRON-SULFUR ATP-BINDING PROTEIN"/>
    <property type="match status" value="1"/>
</dbReference>
<dbReference type="PANTHER" id="PTHR42864:SF2">
    <property type="entry name" value="LIGHT-INDEPENDENT PROTOCHLOROPHYLLIDE REDUCTASE IRON-SULFUR ATP-BINDING PROTEIN"/>
    <property type="match status" value="1"/>
</dbReference>
<dbReference type="Pfam" id="PF00142">
    <property type="entry name" value="Fer4_NifH"/>
    <property type="match status" value="1"/>
</dbReference>
<dbReference type="PIRSF" id="PIRSF000363">
    <property type="entry name" value="Nitrogenase_iron"/>
    <property type="match status" value="1"/>
</dbReference>
<dbReference type="PRINTS" id="PR00091">
    <property type="entry name" value="NITROGNASEII"/>
</dbReference>
<dbReference type="SUPFAM" id="SSF52540">
    <property type="entry name" value="P-loop containing nucleoside triphosphate hydrolases"/>
    <property type="match status" value="1"/>
</dbReference>
<dbReference type="PROSITE" id="PS00746">
    <property type="entry name" value="NIFH_FRXC_1"/>
    <property type="match status" value="1"/>
</dbReference>
<dbReference type="PROSITE" id="PS00692">
    <property type="entry name" value="NIFH_FRXC_2"/>
    <property type="match status" value="1"/>
</dbReference>
<dbReference type="PROSITE" id="PS51026">
    <property type="entry name" value="NIFH_FRXC_3"/>
    <property type="match status" value="1"/>
</dbReference>
<feature type="chain" id="PRO_0000139541" description="Nitrogenase iron protein">
    <location>
        <begin position="1"/>
        <end position="275"/>
    </location>
</feature>
<feature type="binding site" evidence="2">
    <location>
        <begin position="9"/>
        <end position="16"/>
    </location>
    <ligand>
        <name>ATP</name>
        <dbReference type="ChEBI" id="CHEBI:30616"/>
    </ligand>
</feature>
<feature type="binding site" evidence="1">
    <location>
        <position position="97"/>
    </location>
    <ligand>
        <name>[4Fe-4S] cluster</name>
        <dbReference type="ChEBI" id="CHEBI:49883"/>
        <note>ligand shared between dimeric partners</note>
    </ligand>
</feature>
<feature type="binding site" evidence="1">
    <location>
        <position position="132"/>
    </location>
    <ligand>
        <name>[4Fe-4S] cluster</name>
        <dbReference type="ChEBI" id="CHEBI:49883"/>
        <note>ligand shared between dimeric partners</note>
    </ligand>
</feature>
<feature type="modified residue" description="ADP-ribosylarginine; by dinitrogenase reductase ADP-ribosyltransferase" evidence="1">
    <location>
        <position position="100"/>
    </location>
</feature>
<keyword id="KW-0004">4Fe-4S</keyword>
<keyword id="KW-0013">ADP-ribosylation</keyword>
<keyword id="KW-0067">ATP-binding</keyword>
<keyword id="KW-0408">Iron</keyword>
<keyword id="KW-0411">Iron-sulfur</keyword>
<keyword id="KW-0479">Metal-binding</keyword>
<keyword id="KW-0535">Nitrogen fixation</keyword>
<keyword id="KW-0547">Nucleotide-binding</keyword>
<keyword id="KW-0560">Oxidoreductase</keyword>
<protein>
    <recommendedName>
        <fullName>Nitrogenase iron protein</fullName>
        <ecNumber>1.18.6.1</ecNumber>
    </recommendedName>
    <alternativeName>
        <fullName>Nitrogenase Fe protein</fullName>
    </alternativeName>
    <alternativeName>
        <fullName>Nitrogenase component II</fullName>
    </alternativeName>
    <alternativeName>
        <fullName>Nitrogenase reductase</fullName>
    </alternativeName>
</protein>
<gene>
    <name type="primary">nifH</name>
</gene>
<comment type="function">
    <text evidence="1">The key enzymatic reactions in nitrogen fixation are catalyzed by the nitrogenase complex, which has 2 components: the iron protein and the molybdenum-iron protein.</text>
</comment>
<comment type="catalytic activity">
    <reaction>
        <text>N2 + 8 reduced [2Fe-2S]-[ferredoxin] + 16 ATP + 16 H2O = H2 + 8 oxidized [2Fe-2S]-[ferredoxin] + 2 NH4(+) + 16 ADP + 16 phosphate + 6 H(+)</text>
        <dbReference type="Rhea" id="RHEA:21448"/>
        <dbReference type="Rhea" id="RHEA-COMP:10000"/>
        <dbReference type="Rhea" id="RHEA-COMP:10001"/>
        <dbReference type="ChEBI" id="CHEBI:15377"/>
        <dbReference type="ChEBI" id="CHEBI:15378"/>
        <dbReference type="ChEBI" id="CHEBI:17997"/>
        <dbReference type="ChEBI" id="CHEBI:18276"/>
        <dbReference type="ChEBI" id="CHEBI:28938"/>
        <dbReference type="ChEBI" id="CHEBI:30616"/>
        <dbReference type="ChEBI" id="CHEBI:33737"/>
        <dbReference type="ChEBI" id="CHEBI:33738"/>
        <dbReference type="ChEBI" id="CHEBI:43474"/>
        <dbReference type="ChEBI" id="CHEBI:456216"/>
        <dbReference type="EC" id="1.18.6.1"/>
    </reaction>
</comment>
<comment type="cofactor">
    <cofactor evidence="1">
        <name>[4Fe-4S] cluster</name>
        <dbReference type="ChEBI" id="CHEBI:49883"/>
    </cofactor>
    <text evidence="1">Binds 1 [4Fe-4S] cluster per dimer.</text>
</comment>
<comment type="subunit">
    <text evidence="1">Homodimer.</text>
</comment>
<comment type="PTM">
    <text evidence="1">The reversible ADP-ribosylation of Arg-100 inactivates the nitrogenase reductase and regulates nitrogenase activity.</text>
</comment>
<comment type="similarity">
    <text evidence="3">Belongs to the NifH/BchL/ChlL family.</text>
</comment>
<name>NIFH_METMI</name>
<proteinExistence type="inferred from homology"/>
<evidence type="ECO:0000250" key="1"/>
<evidence type="ECO:0000255" key="2"/>
<evidence type="ECO:0000305" key="3"/>
<accession>P0CW56</accession>
<accession>Q50218</accession>
<reference key="1">
    <citation type="journal article" date="1995" name="J. Bacteriol.">
        <title>Genetics in methanogens: transposon insertion mutagenesis of a Methanococcus maripaludis nifH gene.</title>
        <authorList>
            <person name="Blank C.E."/>
            <person name="Kessler P.S."/>
            <person name="Leigh J.A."/>
        </authorList>
    </citation>
    <scope>NUCLEOTIDE SEQUENCE [GENOMIC DNA]</scope>
    <source>
        <strain>ATCC 43000 / DSM 2067 / JCM 10722 / JJ</strain>
    </source>
</reference>
<organism>
    <name type="scientific">Methanococcus maripaludis</name>
    <name type="common">Methanococcus deltae</name>
    <dbReference type="NCBI Taxonomy" id="39152"/>
    <lineage>
        <taxon>Archaea</taxon>
        <taxon>Methanobacteriati</taxon>
        <taxon>Methanobacteriota</taxon>
        <taxon>Methanomada group</taxon>
        <taxon>Methanococci</taxon>
        <taxon>Methanococcales</taxon>
        <taxon>Methanococcaceae</taxon>
        <taxon>Methanococcus</taxon>
    </lineage>
</organism>